<keyword id="KW-0963">Cytoplasm</keyword>
<keyword id="KW-0238">DNA-binding</keyword>
<keyword id="KW-1185">Reference proteome</keyword>
<keyword id="KW-0678">Repressor</keyword>
<keyword id="KW-0804">Transcription</keyword>
<keyword id="KW-0805">Transcription regulation</keyword>
<sequence>MTEAQRHQILLEMLAQLGFVTVEKVVERLGISPATARRDINKLDESGKLKKVRNGAEAITQQRPRWTPMNLHQAQNHDEKVRIAKAASQLVNPGESVVINCGSTAFLLGQEMCGKPVQIITNYLPLANYLIDQEHDSVIIMGGQYNKSQSITLSPQGSENSLYAGHWMFTSSKGLTAEGLYKTDMLTAMAEQKMLSVVGKLVVLVDSSKIGERAGMLFSRADQIDMLITGKNANPETLQQLEAQGVSILRV</sequence>
<organism>
    <name type="scientific">Shigella dysenteriae serotype 1 (strain Sd197)</name>
    <dbReference type="NCBI Taxonomy" id="300267"/>
    <lineage>
        <taxon>Bacteria</taxon>
        <taxon>Pseudomonadati</taxon>
        <taxon>Pseudomonadota</taxon>
        <taxon>Gammaproteobacteria</taxon>
        <taxon>Enterobacterales</taxon>
        <taxon>Enterobacteriaceae</taxon>
        <taxon>Shigella</taxon>
    </lineage>
</organism>
<feature type="chain" id="PRO_0000234027" description="HTH-type transcriptional regulator UlaR">
    <location>
        <begin position="1"/>
        <end position="251"/>
    </location>
</feature>
<feature type="domain" description="HTH deoR-type" evidence="1">
    <location>
        <begin position="3"/>
        <end position="58"/>
    </location>
</feature>
<feature type="DNA-binding region" description="H-T-H motif" evidence="1">
    <location>
        <begin position="20"/>
        <end position="39"/>
    </location>
</feature>
<gene>
    <name evidence="1" type="primary">ulaR</name>
    <name type="ordered locus">SDY_4360</name>
</gene>
<reference key="1">
    <citation type="journal article" date="2005" name="Nucleic Acids Res.">
        <title>Genome dynamics and diversity of Shigella species, the etiologic agents of bacillary dysentery.</title>
        <authorList>
            <person name="Yang F."/>
            <person name="Yang J."/>
            <person name="Zhang X."/>
            <person name="Chen L."/>
            <person name="Jiang Y."/>
            <person name="Yan Y."/>
            <person name="Tang X."/>
            <person name="Wang J."/>
            <person name="Xiong Z."/>
            <person name="Dong J."/>
            <person name="Xue Y."/>
            <person name="Zhu Y."/>
            <person name="Xu X."/>
            <person name="Sun L."/>
            <person name="Chen S."/>
            <person name="Nie H."/>
            <person name="Peng J."/>
            <person name="Xu J."/>
            <person name="Wang Y."/>
            <person name="Yuan Z."/>
            <person name="Wen Y."/>
            <person name="Yao Z."/>
            <person name="Shen Y."/>
            <person name="Qiang B."/>
            <person name="Hou Y."/>
            <person name="Yu J."/>
            <person name="Jin Q."/>
        </authorList>
    </citation>
    <scope>NUCLEOTIDE SEQUENCE [LARGE SCALE GENOMIC DNA]</scope>
    <source>
        <strain>Sd197</strain>
    </source>
</reference>
<protein>
    <recommendedName>
        <fullName evidence="1">HTH-type transcriptional regulator UlaR</fullName>
    </recommendedName>
</protein>
<proteinExistence type="inferred from homology"/>
<comment type="function">
    <text evidence="1">Represses ulaG and the ulaABCDEF operon.</text>
</comment>
<comment type="subcellular location">
    <subcellularLocation>
        <location evidence="1">Cytoplasm</location>
    </subcellularLocation>
</comment>
<dbReference type="EMBL" id="CP000034">
    <property type="protein sequence ID" value="ABB64249.1"/>
    <property type="molecule type" value="Genomic_DNA"/>
</dbReference>
<dbReference type="RefSeq" id="WP_000133627.1">
    <property type="nucleotide sequence ID" value="NC_007606.1"/>
</dbReference>
<dbReference type="RefSeq" id="YP_405740.1">
    <property type="nucleotide sequence ID" value="NC_007606.1"/>
</dbReference>
<dbReference type="SMR" id="Q328K6"/>
<dbReference type="STRING" id="300267.SDY_4360"/>
<dbReference type="EnsemblBacteria" id="ABB64249">
    <property type="protein sequence ID" value="ABB64249"/>
    <property type="gene ID" value="SDY_4360"/>
</dbReference>
<dbReference type="KEGG" id="sdy:SDY_4360"/>
<dbReference type="PATRIC" id="fig|300267.13.peg.5148"/>
<dbReference type="HOGENOM" id="CLU_060699_3_2_6"/>
<dbReference type="Proteomes" id="UP000002716">
    <property type="component" value="Chromosome"/>
</dbReference>
<dbReference type="GO" id="GO:0005737">
    <property type="term" value="C:cytoplasm"/>
    <property type="evidence" value="ECO:0007669"/>
    <property type="project" value="UniProtKB-SubCell"/>
</dbReference>
<dbReference type="GO" id="GO:0003677">
    <property type="term" value="F:DNA binding"/>
    <property type="evidence" value="ECO:0007669"/>
    <property type="project" value="UniProtKB-KW"/>
</dbReference>
<dbReference type="GO" id="GO:0003700">
    <property type="term" value="F:DNA-binding transcription factor activity"/>
    <property type="evidence" value="ECO:0007669"/>
    <property type="project" value="InterPro"/>
</dbReference>
<dbReference type="GO" id="GO:0045892">
    <property type="term" value="P:negative regulation of DNA-templated transcription"/>
    <property type="evidence" value="ECO:0007669"/>
    <property type="project" value="UniProtKB-UniRule"/>
</dbReference>
<dbReference type="FunFam" id="1.10.10.10:FF:000160">
    <property type="entry name" value="HTH-type transcriptional regulator UlaR"/>
    <property type="match status" value="1"/>
</dbReference>
<dbReference type="Gene3D" id="1.10.10.10">
    <property type="entry name" value="Winged helix-like DNA-binding domain superfamily/Winged helix DNA-binding domain"/>
    <property type="match status" value="1"/>
</dbReference>
<dbReference type="HAMAP" id="MF_01563">
    <property type="entry name" value="HTH_type_UlaR"/>
    <property type="match status" value="1"/>
</dbReference>
<dbReference type="InterPro" id="IPR050313">
    <property type="entry name" value="Carb_Metab_HTH_regulators"/>
</dbReference>
<dbReference type="InterPro" id="IPR014036">
    <property type="entry name" value="DeoR-like_C"/>
</dbReference>
<dbReference type="InterPro" id="IPR001034">
    <property type="entry name" value="DeoR_HTH"/>
</dbReference>
<dbReference type="InterPro" id="IPR037171">
    <property type="entry name" value="NagB/RpiA_transferase-like"/>
</dbReference>
<dbReference type="InterPro" id="IPR018356">
    <property type="entry name" value="Tscrpt_reg_HTH_DeoR_CS"/>
</dbReference>
<dbReference type="InterPro" id="IPR023711">
    <property type="entry name" value="Tscrpt_reg_HTH_UlaR"/>
</dbReference>
<dbReference type="InterPro" id="IPR036388">
    <property type="entry name" value="WH-like_DNA-bd_sf"/>
</dbReference>
<dbReference type="InterPro" id="IPR036390">
    <property type="entry name" value="WH_DNA-bd_sf"/>
</dbReference>
<dbReference type="NCBIfam" id="NF010034">
    <property type="entry name" value="PRK13509.1"/>
    <property type="match status" value="1"/>
</dbReference>
<dbReference type="PANTHER" id="PTHR30363">
    <property type="entry name" value="HTH-TYPE TRANSCRIPTIONAL REGULATOR SRLR-RELATED"/>
    <property type="match status" value="1"/>
</dbReference>
<dbReference type="PANTHER" id="PTHR30363:SF55">
    <property type="entry name" value="HTH-TYPE TRANSCRIPTIONAL REGULATOR ULAR"/>
    <property type="match status" value="1"/>
</dbReference>
<dbReference type="Pfam" id="PF00455">
    <property type="entry name" value="DeoRC"/>
    <property type="match status" value="1"/>
</dbReference>
<dbReference type="Pfam" id="PF08220">
    <property type="entry name" value="HTH_DeoR"/>
    <property type="match status" value="1"/>
</dbReference>
<dbReference type="PRINTS" id="PR00037">
    <property type="entry name" value="HTHLACR"/>
</dbReference>
<dbReference type="SMART" id="SM01134">
    <property type="entry name" value="DeoRC"/>
    <property type="match status" value="1"/>
</dbReference>
<dbReference type="SMART" id="SM00420">
    <property type="entry name" value="HTH_DEOR"/>
    <property type="match status" value="1"/>
</dbReference>
<dbReference type="SUPFAM" id="SSF100950">
    <property type="entry name" value="NagB/RpiA/CoA transferase-like"/>
    <property type="match status" value="1"/>
</dbReference>
<dbReference type="SUPFAM" id="SSF46785">
    <property type="entry name" value="Winged helix' DNA-binding domain"/>
    <property type="match status" value="1"/>
</dbReference>
<dbReference type="PROSITE" id="PS00894">
    <property type="entry name" value="HTH_DEOR_1"/>
    <property type="match status" value="1"/>
</dbReference>
<dbReference type="PROSITE" id="PS51000">
    <property type="entry name" value="HTH_DEOR_2"/>
    <property type="match status" value="1"/>
</dbReference>
<evidence type="ECO:0000255" key="1">
    <source>
        <dbReference type="HAMAP-Rule" id="MF_01563"/>
    </source>
</evidence>
<accession>Q328K6</accession>
<name>ULAR_SHIDS</name>